<keyword id="KW-0067">ATP-binding</keyword>
<keyword id="KW-0436">Ligase</keyword>
<keyword id="KW-0496">Mitochondrion</keyword>
<keyword id="KW-0547">Nucleotide-binding</keyword>
<keyword id="KW-0648">Protein biosynthesis</keyword>
<keyword id="KW-1185">Reference proteome</keyword>
<keyword id="KW-0809">Transit peptide</keyword>
<evidence type="ECO:0000255" key="1">
    <source>
        <dbReference type="HAMAP-Rule" id="MF_03147"/>
    </source>
</evidence>
<gene>
    <name evidence="1" type="primary">PET112</name>
    <name type="ordered locus">ZYRO0B03608g</name>
</gene>
<feature type="transit peptide" description="Mitochondrion" evidence="1">
    <location>
        <begin position="1"/>
        <end position="66"/>
    </location>
</feature>
<feature type="chain" id="PRO_0000413286" description="Glutamyl-tRNA(Gln) amidotransferase subunit B, mitochondrial">
    <location>
        <begin position="67"/>
        <end position="542"/>
    </location>
</feature>
<reference key="1">
    <citation type="journal article" date="2009" name="Genome Res.">
        <title>Comparative genomics of protoploid Saccharomycetaceae.</title>
        <authorList>
            <consortium name="The Genolevures Consortium"/>
            <person name="Souciet J.-L."/>
            <person name="Dujon B."/>
            <person name="Gaillardin C."/>
            <person name="Johnston M."/>
            <person name="Baret P.V."/>
            <person name="Cliften P."/>
            <person name="Sherman D.J."/>
            <person name="Weissenbach J."/>
            <person name="Westhof E."/>
            <person name="Wincker P."/>
            <person name="Jubin C."/>
            <person name="Poulain J."/>
            <person name="Barbe V."/>
            <person name="Segurens B."/>
            <person name="Artiguenave F."/>
            <person name="Anthouard V."/>
            <person name="Vacherie B."/>
            <person name="Val M.-E."/>
            <person name="Fulton R.S."/>
            <person name="Minx P."/>
            <person name="Wilson R."/>
            <person name="Durrens P."/>
            <person name="Jean G."/>
            <person name="Marck C."/>
            <person name="Martin T."/>
            <person name="Nikolski M."/>
            <person name="Rolland T."/>
            <person name="Seret M.-L."/>
            <person name="Casaregola S."/>
            <person name="Despons L."/>
            <person name="Fairhead C."/>
            <person name="Fischer G."/>
            <person name="Lafontaine I."/>
            <person name="Leh V."/>
            <person name="Lemaire M."/>
            <person name="de Montigny J."/>
            <person name="Neuveglise C."/>
            <person name="Thierry A."/>
            <person name="Blanc-Lenfle I."/>
            <person name="Bleykasten C."/>
            <person name="Diffels J."/>
            <person name="Fritsch E."/>
            <person name="Frangeul L."/>
            <person name="Goeffon A."/>
            <person name="Jauniaux N."/>
            <person name="Kachouri-Lafond R."/>
            <person name="Payen C."/>
            <person name="Potier S."/>
            <person name="Pribylova L."/>
            <person name="Ozanne C."/>
            <person name="Richard G.-F."/>
            <person name="Sacerdot C."/>
            <person name="Straub M.-L."/>
            <person name="Talla E."/>
        </authorList>
    </citation>
    <scope>NUCLEOTIDE SEQUENCE [LARGE SCALE GENOMIC DNA]</scope>
    <source>
        <strain>ATCC 2623 / CBS 732 / BCRC 21506 / NBRC 1130 / NCYC 568 / NRRL Y-229</strain>
    </source>
</reference>
<organism>
    <name type="scientific">Zygosaccharomyces rouxii (strain ATCC 2623 / CBS 732 / NBRC 1130 / NCYC 568 / NRRL Y-229)</name>
    <dbReference type="NCBI Taxonomy" id="559307"/>
    <lineage>
        <taxon>Eukaryota</taxon>
        <taxon>Fungi</taxon>
        <taxon>Dikarya</taxon>
        <taxon>Ascomycota</taxon>
        <taxon>Saccharomycotina</taxon>
        <taxon>Saccharomycetes</taxon>
        <taxon>Saccharomycetales</taxon>
        <taxon>Saccharomycetaceae</taxon>
        <taxon>Zygosaccharomyces</taxon>
    </lineage>
</organism>
<dbReference type="EC" id="6.3.5.-" evidence="1"/>
<dbReference type="EMBL" id="CU928174">
    <property type="protein sequence ID" value="CAR26179.1"/>
    <property type="molecule type" value="Genomic_DNA"/>
</dbReference>
<dbReference type="RefSeq" id="XP_002495112.1">
    <property type="nucleotide sequence ID" value="XM_002495067.1"/>
</dbReference>
<dbReference type="SMR" id="C5DQW8"/>
<dbReference type="FunCoup" id="C5DQW8">
    <property type="interactions" value="399"/>
</dbReference>
<dbReference type="STRING" id="559307.C5DQW8"/>
<dbReference type="GeneID" id="8202252"/>
<dbReference type="KEGG" id="zro:ZYRO0B03608g"/>
<dbReference type="HOGENOM" id="CLU_019240_4_0_1"/>
<dbReference type="InParanoid" id="C5DQW8"/>
<dbReference type="Proteomes" id="UP000008536">
    <property type="component" value="Chromosome B"/>
</dbReference>
<dbReference type="GO" id="GO:0030956">
    <property type="term" value="C:glutamyl-tRNA(Gln) amidotransferase complex"/>
    <property type="evidence" value="ECO:0007669"/>
    <property type="project" value="UniProtKB-UniRule"/>
</dbReference>
<dbReference type="GO" id="GO:0005739">
    <property type="term" value="C:mitochondrion"/>
    <property type="evidence" value="ECO:0007669"/>
    <property type="project" value="UniProtKB-SubCell"/>
</dbReference>
<dbReference type="GO" id="GO:0005524">
    <property type="term" value="F:ATP binding"/>
    <property type="evidence" value="ECO:0007669"/>
    <property type="project" value="UniProtKB-KW"/>
</dbReference>
<dbReference type="GO" id="GO:0050567">
    <property type="term" value="F:glutaminyl-tRNA synthase (glutamine-hydrolyzing) activity"/>
    <property type="evidence" value="ECO:0007669"/>
    <property type="project" value="UniProtKB-UniRule"/>
</dbReference>
<dbReference type="GO" id="GO:0070681">
    <property type="term" value="P:glutaminyl-tRNAGln biosynthesis via transamidation"/>
    <property type="evidence" value="ECO:0007669"/>
    <property type="project" value="UniProtKB-UniRule"/>
</dbReference>
<dbReference type="GO" id="GO:0032543">
    <property type="term" value="P:mitochondrial translation"/>
    <property type="evidence" value="ECO:0007669"/>
    <property type="project" value="UniProtKB-UniRule"/>
</dbReference>
<dbReference type="Gene3D" id="1.10.10.410">
    <property type="match status" value="1"/>
</dbReference>
<dbReference type="HAMAP" id="MF_00121">
    <property type="entry name" value="GatB"/>
    <property type="match status" value="1"/>
</dbReference>
<dbReference type="InterPro" id="IPR017959">
    <property type="entry name" value="Asn/Gln-tRNA_amidoTrfase_suB/E"/>
</dbReference>
<dbReference type="InterPro" id="IPR006075">
    <property type="entry name" value="Asn/Gln-tRNA_Trfase_suB/E_cat"/>
</dbReference>
<dbReference type="InterPro" id="IPR018027">
    <property type="entry name" value="Asn/Gln_amidotransferase"/>
</dbReference>
<dbReference type="InterPro" id="IPR003789">
    <property type="entry name" value="Asn/Gln_tRNA_amidoTrase-B-like"/>
</dbReference>
<dbReference type="InterPro" id="IPR004413">
    <property type="entry name" value="GatB"/>
</dbReference>
<dbReference type="InterPro" id="IPR023168">
    <property type="entry name" value="GatB_Yqey_C_2"/>
</dbReference>
<dbReference type="InterPro" id="IPR017958">
    <property type="entry name" value="Gln-tRNA_amidoTrfase_suB_CS"/>
</dbReference>
<dbReference type="InterPro" id="IPR014746">
    <property type="entry name" value="Gln_synth/guanido_kin_cat_dom"/>
</dbReference>
<dbReference type="NCBIfam" id="TIGR00133">
    <property type="entry name" value="gatB"/>
    <property type="match status" value="1"/>
</dbReference>
<dbReference type="NCBIfam" id="NF004012">
    <property type="entry name" value="PRK05477.1-2"/>
    <property type="match status" value="1"/>
</dbReference>
<dbReference type="PANTHER" id="PTHR11659">
    <property type="entry name" value="GLUTAMYL-TRNA GLN AMIDOTRANSFERASE SUBUNIT B MITOCHONDRIAL AND PROKARYOTIC PET112-RELATED"/>
    <property type="match status" value="1"/>
</dbReference>
<dbReference type="PANTHER" id="PTHR11659:SF0">
    <property type="entry name" value="GLUTAMYL-TRNA(GLN) AMIDOTRANSFERASE SUBUNIT B, MITOCHONDRIAL"/>
    <property type="match status" value="1"/>
</dbReference>
<dbReference type="Pfam" id="PF02934">
    <property type="entry name" value="GatB_N"/>
    <property type="match status" value="1"/>
</dbReference>
<dbReference type="Pfam" id="PF02637">
    <property type="entry name" value="GatB_Yqey"/>
    <property type="match status" value="1"/>
</dbReference>
<dbReference type="SMART" id="SM00845">
    <property type="entry name" value="GatB_Yqey"/>
    <property type="match status" value="1"/>
</dbReference>
<dbReference type="SUPFAM" id="SSF89095">
    <property type="entry name" value="GatB/YqeY motif"/>
    <property type="match status" value="1"/>
</dbReference>
<dbReference type="SUPFAM" id="SSF55931">
    <property type="entry name" value="Glutamine synthetase/guanido kinase"/>
    <property type="match status" value="1"/>
</dbReference>
<dbReference type="PROSITE" id="PS01234">
    <property type="entry name" value="GATB"/>
    <property type="match status" value="1"/>
</dbReference>
<name>GATB_ZYGRC</name>
<comment type="function">
    <text evidence="1">Allows the formation of correctly charged Gln-tRNA(Gln) through the transamidation of misacylated Glu-tRNA(Gln) in the mitochondria. The reaction takes place in the presence of glutamine and ATP through an activated gamma-phospho-Glu-tRNA(Gln).</text>
</comment>
<comment type="catalytic activity">
    <reaction evidence="1">
        <text>L-glutamyl-tRNA(Gln) + L-glutamine + ATP + H2O = L-glutaminyl-tRNA(Gln) + L-glutamate + ADP + phosphate + H(+)</text>
        <dbReference type="Rhea" id="RHEA:17521"/>
        <dbReference type="Rhea" id="RHEA-COMP:9681"/>
        <dbReference type="Rhea" id="RHEA-COMP:9684"/>
        <dbReference type="ChEBI" id="CHEBI:15377"/>
        <dbReference type="ChEBI" id="CHEBI:15378"/>
        <dbReference type="ChEBI" id="CHEBI:29985"/>
        <dbReference type="ChEBI" id="CHEBI:30616"/>
        <dbReference type="ChEBI" id="CHEBI:43474"/>
        <dbReference type="ChEBI" id="CHEBI:58359"/>
        <dbReference type="ChEBI" id="CHEBI:78520"/>
        <dbReference type="ChEBI" id="CHEBI:78521"/>
        <dbReference type="ChEBI" id="CHEBI:456216"/>
    </reaction>
</comment>
<comment type="subunit">
    <text evidence="1">Subunit of the heterotrimeric GatFAB amidotransferase (AdT) complex, composed of A, B and F subunits.</text>
</comment>
<comment type="subcellular location">
    <subcellularLocation>
        <location evidence="1">Mitochondrion</location>
    </subcellularLocation>
</comment>
<comment type="similarity">
    <text evidence="1">Belongs to the GatB/GatE family. GatB subfamily.</text>
</comment>
<accession>C5DQW8</accession>
<sequence>MRVFRRFYQVQLPPISKFRLLPQYKLKCGLEIHTQLDTRNKLFSMSTNDPFHSANKPNSHTSFFDIALPGTQPILNHEAVLFATKLAIALNCQINLDSQFDRKHYFYGDQPLGYQITQHFSPFASRGHLPLHKDIDGIDEISKNIHITQLQIEQDTGKSLYRKSDHITLIDLNRSNVPLIEMVTEPDFQDLKQIRAFIKKYQNLVRHLKISTGDLETGAMRVDVNLSINDHARVELKNLPNTSSILNAIKHEYLRQVQIVEDGMADELLSQPETRGWTGSSTVKLRSKETTIDYRYMPDMELPRITLAADVVETLQKTMPPLPDKILNTLMSEPYKLSLKDAKILCLSSNGQDEIYNHEELQQFYLDTFHSYADRVKGNIEANKLSKLPTNWIIHELLGDLNKLELPLSEITKVLTPQIFADFLMLIHNNEISSASGKLLLFHVLKTLKETNCDTSTTIDFNSLIDEFDIRTINQIDHDELREICNEIIETLNNDKLINDIVTGKKKKSIKFLVGQGMKLSQGRIKAQDFERTFKEVLDVKW</sequence>
<proteinExistence type="inferred from homology"/>
<protein>
    <recommendedName>
        <fullName evidence="1">Glutamyl-tRNA(Gln) amidotransferase subunit B, mitochondrial</fullName>
        <shortName evidence="1">Glu-AdT subunit B</shortName>
        <ecNumber evidence="1">6.3.5.-</ecNumber>
    </recommendedName>
</protein>